<accession>P58639</accession>
<protein>
    <recommendedName>
        <fullName evidence="1">Orotidine 5'-phosphate decarboxylase</fullName>
        <ecNumber evidence="1">4.1.1.23</ecNumber>
    </recommendedName>
    <alternativeName>
        <fullName evidence="1">OMP decarboxylase</fullName>
        <shortName evidence="1">OMPDCase</shortName>
        <shortName evidence="1">OMPdecase</shortName>
    </alternativeName>
</protein>
<comment type="function">
    <text evidence="1">Catalyzes the decarboxylation of orotidine 5'-monophosphate (OMP) to uridine 5'-monophosphate (UMP).</text>
</comment>
<comment type="catalytic activity">
    <reaction evidence="1">
        <text>orotidine 5'-phosphate + H(+) = UMP + CO2</text>
        <dbReference type="Rhea" id="RHEA:11596"/>
        <dbReference type="ChEBI" id="CHEBI:15378"/>
        <dbReference type="ChEBI" id="CHEBI:16526"/>
        <dbReference type="ChEBI" id="CHEBI:57538"/>
        <dbReference type="ChEBI" id="CHEBI:57865"/>
        <dbReference type="EC" id="4.1.1.23"/>
    </reaction>
</comment>
<comment type="pathway">
    <text evidence="1">Pyrimidine metabolism; UMP biosynthesis via de novo pathway; UMP from orotate: step 2/2.</text>
</comment>
<comment type="subunit">
    <text evidence="1">Homodimer.</text>
</comment>
<comment type="similarity">
    <text evidence="1">Belongs to the OMP decarboxylase family. Type 1 subfamily.</text>
</comment>
<keyword id="KW-0210">Decarboxylase</keyword>
<keyword id="KW-0456">Lyase</keyword>
<keyword id="KW-0665">Pyrimidine biosynthesis</keyword>
<keyword id="KW-1185">Reference proteome</keyword>
<evidence type="ECO:0000255" key="1">
    <source>
        <dbReference type="HAMAP-Rule" id="MF_01200"/>
    </source>
</evidence>
<dbReference type="EC" id="4.1.1.23" evidence="1"/>
<dbReference type="EMBL" id="BA000019">
    <property type="protein sequence ID" value="BAB74682.1"/>
    <property type="molecule type" value="Genomic_DNA"/>
</dbReference>
<dbReference type="PIR" id="AH2178">
    <property type="entry name" value="AH2178"/>
</dbReference>
<dbReference type="RefSeq" id="WP_010997134.1">
    <property type="nucleotide sequence ID" value="NZ_RSCN01000003.1"/>
</dbReference>
<dbReference type="SMR" id="P58639"/>
<dbReference type="STRING" id="103690.gene:10495019"/>
<dbReference type="KEGG" id="ana:alr2983"/>
<dbReference type="eggNOG" id="COG0284">
    <property type="taxonomic scope" value="Bacteria"/>
</dbReference>
<dbReference type="OrthoDB" id="9806203at2"/>
<dbReference type="UniPathway" id="UPA00070">
    <property type="reaction ID" value="UER00120"/>
</dbReference>
<dbReference type="Proteomes" id="UP000002483">
    <property type="component" value="Chromosome"/>
</dbReference>
<dbReference type="GO" id="GO:0005829">
    <property type="term" value="C:cytosol"/>
    <property type="evidence" value="ECO:0007669"/>
    <property type="project" value="TreeGrafter"/>
</dbReference>
<dbReference type="GO" id="GO:0004590">
    <property type="term" value="F:orotidine-5'-phosphate decarboxylase activity"/>
    <property type="evidence" value="ECO:0007669"/>
    <property type="project" value="UniProtKB-UniRule"/>
</dbReference>
<dbReference type="GO" id="GO:0006207">
    <property type="term" value="P:'de novo' pyrimidine nucleobase biosynthetic process"/>
    <property type="evidence" value="ECO:0007669"/>
    <property type="project" value="InterPro"/>
</dbReference>
<dbReference type="GO" id="GO:0044205">
    <property type="term" value="P:'de novo' UMP biosynthetic process"/>
    <property type="evidence" value="ECO:0007669"/>
    <property type="project" value="UniProtKB-UniRule"/>
</dbReference>
<dbReference type="CDD" id="cd04725">
    <property type="entry name" value="OMP_decarboxylase_like"/>
    <property type="match status" value="1"/>
</dbReference>
<dbReference type="FunFam" id="3.20.20.70:FF:000015">
    <property type="entry name" value="Orotidine 5'-phosphate decarboxylase"/>
    <property type="match status" value="1"/>
</dbReference>
<dbReference type="Gene3D" id="3.20.20.70">
    <property type="entry name" value="Aldolase class I"/>
    <property type="match status" value="1"/>
</dbReference>
<dbReference type="HAMAP" id="MF_01200_B">
    <property type="entry name" value="OMPdecase_type1_B"/>
    <property type="match status" value="1"/>
</dbReference>
<dbReference type="InterPro" id="IPR013785">
    <property type="entry name" value="Aldolase_TIM"/>
</dbReference>
<dbReference type="InterPro" id="IPR014732">
    <property type="entry name" value="OMPdecase"/>
</dbReference>
<dbReference type="InterPro" id="IPR018089">
    <property type="entry name" value="OMPdecase_AS"/>
</dbReference>
<dbReference type="InterPro" id="IPR047596">
    <property type="entry name" value="OMPdecase_bac"/>
</dbReference>
<dbReference type="InterPro" id="IPR001754">
    <property type="entry name" value="OMPdeCOase_dom"/>
</dbReference>
<dbReference type="InterPro" id="IPR011060">
    <property type="entry name" value="RibuloseP-bd_barrel"/>
</dbReference>
<dbReference type="NCBIfam" id="NF001273">
    <property type="entry name" value="PRK00230.1"/>
    <property type="match status" value="1"/>
</dbReference>
<dbReference type="NCBIfam" id="TIGR01740">
    <property type="entry name" value="pyrF"/>
    <property type="match status" value="1"/>
</dbReference>
<dbReference type="PANTHER" id="PTHR32119">
    <property type="entry name" value="OROTIDINE 5'-PHOSPHATE DECARBOXYLASE"/>
    <property type="match status" value="1"/>
</dbReference>
<dbReference type="PANTHER" id="PTHR32119:SF2">
    <property type="entry name" value="OROTIDINE 5'-PHOSPHATE DECARBOXYLASE"/>
    <property type="match status" value="1"/>
</dbReference>
<dbReference type="Pfam" id="PF00215">
    <property type="entry name" value="OMPdecase"/>
    <property type="match status" value="1"/>
</dbReference>
<dbReference type="SMART" id="SM00934">
    <property type="entry name" value="OMPdecase"/>
    <property type="match status" value="1"/>
</dbReference>
<dbReference type="SUPFAM" id="SSF51366">
    <property type="entry name" value="Ribulose-phoshate binding barrel"/>
    <property type="match status" value="1"/>
</dbReference>
<dbReference type="PROSITE" id="PS00156">
    <property type="entry name" value="OMPDECASE"/>
    <property type="match status" value="1"/>
</dbReference>
<proteinExistence type="inferred from homology"/>
<reference key="1">
    <citation type="journal article" date="2001" name="DNA Res.">
        <title>Complete genomic sequence of the filamentous nitrogen-fixing cyanobacterium Anabaena sp. strain PCC 7120.</title>
        <authorList>
            <person name="Kaneko T."/>
            <person name="Nakamura Y."/>
            <person name="Wolk C.P."/>
            <person name="Kuritz T."/>
            <person name="Sasamoto S."/>
            <person name="Watanabe A."/>
            <person name="Iriguchi M."/>
            <person name="Ishikawa A."/>
            <person name="Kawashima K."/>
            <person name="Kimura T."/>
            <person name="Kishida Y."/>
            <person name="Kohara M."/>
            <person name="Matsumoto M."/>
            <person name="Matsuno A."/>
            <person name="Muraki A."/>
            <person name="Nakazaki N."/>
            <person name="Shimpo S."/>
            <person name="Sugimoto M."/>
            <person name="Takazawa M."/>
            <person name="Yamada M."/>
            <person name="Yasuda M."/>
            <person name="Tabata S."/>
        </authorList>
    </citation>
    <scope>NUCLEOTIDE SEQUENCE [LARGE SCALE GENOMIC DNA]</scope>
    <source>
        <strain>PCC 7120 / SAG 25.82 / UTEX 2576</strain>
    </source>
</reference>
<feature type="chain" id="PRO_0000134521" description="Orotidine 5'-phosphate decarboxylase">
    <location>
        <begin position="1"/>
        <end position="238"/>
    </location>
</feature>
<feature type="active site" description="Proton donor" evidence="1">
    <location>
        <position position="61"/>
    </location>
</feature>
<feature type="binding site" evidence="1">
    <location>
        <position position="11"/>
    </location>
    <ligand>
        <name>substrate</name>
    </ligand>
</feature>
<feature type="binding site" evidence="1">
    <location>
        <position position="32"/>
    </location>
    <ligand>
        <name>substrate</name>
    </ligand>
</feature>
<feature type="binding site" evidence="1">
    <location>
        <begin position="59"/>
        <end position="68"/>
    </location>
    <ligand>
        <name>substrate</name>
    </ligand>
</feature>
<feature type="binding site" evidence="1">
    <location>
        <position position="123"/>
    </location>
    <ligand>
        <name>substrate</name>
    </ligand>
</feature>
<feature type="binding site" evidence="1">
    <location>
        <position position="185"/>
    </location>
    <ligand>
        <name>substrate</name>
    </ligand>
</feature>
<feature type="binding site" evidence="1">
    <location>
        <position position="194"/>
    </location>
    <ligand>
        <name>substrate</name>
    </ligand>
</feature>
<feature type="binding site" evidence="1">
    <location>
        <position position="214"/>
    </location>
    <ligand>
        <name>substrate</name>
    </ligand>
</feature>
<feature type="binding site" evidence="1">
    <location>
        <position position="215"/>
    </location>
    <ligand>
        <name>substrate</name>
    </ligand>
</feature>
<sequence>MSNDKIIVALDVPDTESAIALIDKLESVTFWKVGLELFTSSGPRILEVLKSRQKRIFLDLKFHDIPNTVAGACRAAAGYGVDLMTIHATSGRDALKAAKEAVEEGAAQAGVKPPKLIAVTVLTSISARQLALDLKIPSELPEYALDMALMAQEMGLDGAVCSPQEVAHLRQICGDDFVLVCPGVRPTWAEAGDQKRSLTPSQAIQAGADYLVIGRPITAAAEPELAWKRISQELTTVV</sequence>
<name>PYRF_NOSS1</name>
<organism>
    <name type="scientific">Nostoc sp. (strain PCC 7120 / SAG 25.82 / UTEX 2576)</name>
    <dbReference type="NCBI Taxonomy" id="103690"/>
    <lineage>
        <taxon>Bacteria</taxon>
        <taxon>Bacillati</taxon>
        <taxon>Cyanobacteriota</taxon>
        <taxon>Cyanophyceae</taxon>
        <taxon>Nostocales</taxon>
        <taxon>Nostocaceae</taxon>
        <taxon>Nostoc</taxon>
    </lineage>
</organism>
<gene>
    <name evidence="1" type="primary">pyrF</name>
    <name type="ordered locus">alr2983</name>
</gene>